<sequence>MAEKRTVSPPAGTERRAKGWIQEAALRMLNNNLHPDVAERPDELIVYGGIGKAARNWECYEAIVDTLLRLENDETLLIQSGKPVAVFRTHPDAPRVLIANSNLVPAWATWDHFHELDKKGLIMYGQMTAGSWIYIGSQGIVQGTYETFAEVARQHFGGTLAGTITLTAGLGGMGGAQPLAVTMNGGVCLAIEVDPARIQRRIDTNYLDTMTDSLDAALEMAKQAKEEKKALSIGLVGNAAEVLPRLVEMGFVPDVLTDQTSAHDPLNGYIPAGLTLDEAAELRARDPKQYIARAKQSIAAHVRAMLAMQKQGAVTFDYGNNIRQVAKDEGVDDAFSFPGFVPAYIRPLFCEGKGPFRWVALSGDPEDIYKTDEVILREFSDNERLCHWIRMAQKRIKFQGLPARICWLGYGERAKFGKIINDMVAKGELKAPIVIGRDHLDSGSVASPNRETEGMKDGSDAIADWPILNALLNAVGGASWVSVHHGGGVGMGYSIHAGMVIVADGTKEAEKRLERVLTTDPGLGVVRHADAGYELAIRTAKEKGIDMPMLK</sequence>
<proteinExistence type="evidence at protein level"/>
<accession>Q5L084</accession>
<comment type="function">
    <text evidence="1">Catalyzes the conversion of urocanate to 4-imidazolone-5-propionate.</text>
</comment>
<comment type="catalytic activity">
    <reaction evidence="1">
        <text>4-imidazolone-5-propanoate = trans-urocanate + H2O</text>
        <dbReference type="Rhea" id="RHEA:13101"/>
        <dbReference type="ChEBI" id="CHEBI:15377"/>
        <dbReference type="ChEBI" id="CHEBI:17771"/>
        <dbReference type="ChEBI" id="CHEBI:77893"/>
        <dbReference type="EC" id="4.2.1.49"/>
    </reaction>
</comment>
<comment type="cofactor">
    <cofactor evidence="1 2">
        <name>NAD(+)</name>
        <dbReference type="ChEBI" id="CHEBI:57540"/>
    </cofactor>
    <text evidence="1 2">Binds 1 NAD(+) per subunit.</text>
</comment>
<comment type="pathway">
    <text evidence="1">Amino-acid degradation; L-histidine degradation into L-glutamate; N-formimidoyl-L-glutamate from L-histidine: step 2/3.</text>
</comment>
<comment type="subcellular location">
    <subcellularLocation>
        <location evidence="1">Cytoplasm</location>
    </subcellularLocation>
</comment>
<comment type="similarity">
    <text evidence="1">Belongs to the urocanase family.</text>
</comment>
<organism>
    <name type="scientific">Geobacillus kaustophilus (strain HTA426)</name>
    <dbReference type="NCBI Taxonomy" id="235909"/>
    <lineage>
        <taxon>Bacteria</taxon>
        <taxon>Bacillati</taxon>
        <taxon>Bacillota</taxon>
        <taxon>Bacilli</taxon>
        <taxon>Bacillales</taxon>
        <taxon>Anoxybacillaceae</taxon>
        <taxon>Geobacillus</taxon>
        <taxon>Geobacillus thermoleovorans group</taxon>
    </lineage>
</organism>
<reference key="1">
    <citation type="journal article" date="2004" name="Nucleic Acids Res.">
        <title>Thermoadaptation trait revealed by the genome sequence of thermophilic Geobacillus kaustophilus.</title>
        <authorList>
            <person name="Takami H."/>
            <person name="Takaki Y."/>
            <person name="Chee G.-J."/>
            <person name="Nishi S."/>
            <person name="Shimamura S."/>
            <person name="Suzuki H."/>
            <person name="Matsui S."/>
            <person name="Uchiyama I."/>
        </authorList>
    </citation>
    <scope>NUCLEOTIDE SEQUENCE [LARGE SCALE GENOMIC DNA]</scope>
    <source>
        <strain>HTA426</strain>
    </source>
</reference>
<reference evidence="3" key="2">
    <citation type="submission" date="2004-08" db="PDB data bank">
        <title>2.4A x-ray structure of urocanase protein complexed with NAD.</title>
        <authorList>
            <person name="Tereshko V."/>
            <person name="Zaborske J."/>
            <person name="Gilbreth R."/>
            <person name="Dementieva I."/>
            <person name="Collart F."/>
            <person name="Joachimiak A."/>
            <person name="Kossiakoff A."/>
        </authorList>
    </citation>
    <scope>X-RAY CRYSTALLOGRAPHY (2.40 ANGSTROMS) IN COMPLEX WITH NAD</scope>
    <scope>COFACTOR</scope>
</reference>
<feature type="chain" id="PRO_1000025128" description="Urocanate hydratase">
    <location>
        <begin position="1"/>
        <end position="551"/>
    </location>
</feature>
<feature type="active site" evidence="1">
    <location>
        <position position="406"/>
    </location>
</feature>
<feature type="binding site" evidence="1">
    <location>
        <begin position="48"/>
        <end position="49"/>
    </location>
    <ligand>
        <name>NAD(+)</name>
        <dbReference type="ChEBI" id="CHEBI:57540"/>
    </ligand>
</feature>
<feature type="binding site" evidence="1">
    <location>
        <position position="126"/>
    </location>
    <ligand>
        <name>NAD(+)</name>
        <dbReference type="ChEBI" id="CHEBI:57540"/>
    </ligand>
</feature>
<feature type="binding site" evidence="1 2 3">
    <location>
        <begin position="172"/>
        <end position="174"/>
    </location>
    <ligand>
        <name>NAD(+)</name>
        <dbReference type="ChEBI" id="CHEBI:57540"/>
    </ligand>
</feature>
<feature type="binding site" evidence="1 2 3">
    <location>
        <position position="192"/>
    </location>
    <ligand>
        <name>NAD(+)</name>
        <dbReference type="ChEBI" id="CHEBI:57540"/>
    </ligand>
</feature>
<feature type="binding site" evidence="1 2 3">
    <location>
        <position position="197"/>
    </location>
    <ligand>
        <name>NAD(+)</name>
        <dbReference type="ChEBI" id="CHEBI:57540"/>
    </ligand>
</feature>
<feature type="binding site" evidence="1 2 3">
    <location>
        <begin position="238"/>
        <end position="239"/>
    </location>
    <ligand>
        <name>NAD(+)</name>
        <dbReference type="ChEBI" id="CHEBI:57540"/>
    </ligand>
</feature>
<feature type="binding site" evidence="1 2 3">
    <location>
        <begin position="259"/>
        <end position="263"/>
    </location>
    <ligand>
        <name>NAD(+)</name>
        <dbReference type="ChEBI" id="CHEBI:57540"/>
    </ligand>
</feature>
<feature type="binding site" evidence="1 2 3">
    <location>
        <begin position="269"/>
        <end position="270"/>
    </location>
    <ligand>
        <name>NAD(+)</name>
        <dbReference type="ChEBI" id="CHEBI:57540"/>
    </ligand>
</feature>
<feature type="binding site" evidence="1 2 3">
    <location>
        <position position="318"/>
    </location>
    <ligand>
        <name>NAD(+)</name>
        <dbReference type="ChEBI" id="CHEBI:57540"/>
    </ligand>
</feature>
<feature type="binding site" evidence="1">
    <location>
        <position position="488"/>
    </location>
    <ligand>
        <name>NAD(+)</name>
        <dbReference type="ChEBI" id="CHEBI:57540"/>
    </ligand>
</feature>
<feature type="strand" evidence="4">
    <location>
        <begin position="16"/>
        <end position="19"/>
    </location>
</feature>
<feature type="helix" evidence="4">
    <location>
        <begin position="20"/>
        <end position="32"/>
    </location>
</feature>
<feature type="strand" evidence="4">
    <location>
        <begin position="54"/>
        <end position="56"/>
    </location>
</feature>
<feature type="helix" evidence="4">
    <location>
        <begin position="57"/>
        <end position="69"/>
    </location>
</feature>
<feature type="strand" evidence="4">
    <location>
        <begin position="74"/>
        <end position="79"/>
    </location>
</feature>
<feature type="strand" evidence="4">
    <location>
        <begin position="82"/>
        <end position="88"/>
    </location>
</feature>
<feature type="strand" evidence="4">
    <location>
        <begin position="95"/>
        <end position="103"/>
    </location>
</feature>
<feature type="helix" evidence="4">
    <location>
        <begin position="106"/>
        <end position="108"/>
    </location>
</feature>
<feature type="helix" evidence="4">
    <location>
        <begin position="138"/>
        <end position="155"/>
    </location>
</feature>
<feature type="strand" evidence="4">
    <location>
        <begin position="164"/>
        <end position="168"/>
    </location>
</feature>
<feature type="helix" evidence="4">
    <location>
        <begin position="174"/>
        <end position="176"/>
    </location>
</feature>
<feature type="helix" evidence="4">
    <location>
        <begin position="177"/>
        <end position="183"/>
    </location>
</feature>
<feature type="strand" evidence="4">
    <location>
        <begin position="187"/>
        <end position="193"/>
    </location>
</feature>
<feature type="helix" evidence="4">
    <location>
        <begin position="195"/>
        <end position="203"/>
    </location>
</feature>
<feature type="strand" evidence="4">
    <location>
        <begin position="208"/>
        <end position="212"/>
    </location>
</feature>
<feature type="helix" evidence="4">
    <location>
        <begin position="214"/>
        <end position="226"/>
    </location>
</feature>
<feature type="strand" evidence="4">
    <location>
        <begin position="231"/>
        <end position="237"/>
    </location>
</feature>
<feature type="helix" evidence="4">
    <location>
        <begin position="239"/>
        <end position="248"/>
    </location>
</feature>
<feature type="strand" evidence="4">
    <location>
        <begin position="254"/>
        <end position="256"/>
    </location>
</feature>
<feature type="turn" evidence="4">
    <location>
        <begin position="265"/>
        <end position="268"/>
    </location>
</feature>
<feature type="helix" evidence="4">
    <location>
        <begin position="276"/>
        <end position="285"/>
    </location>
</feature>
<feature type="helix" evidence="4">
    <location>
        <begin position="287"/>
        <end position="310"/>
    </location>
</feature>
<feature type="helix" evidence="4">
    <location>
        <begin position="322"/>
        <end position="328"/>
    </location>
</feature>
<feature type="helix" evidence="4">
    <location>
        <begin position="334"/>
        <end position="336"/>
    </location>
</feature>
<feature type="helix" evidence="4">
    <location>
        <begin position="340"/>
        <end position="343"/>
    </location>
</feature>
<feature type="helix" evidence="4">
    <location>
        <begin position="346"/>
        <end position="350"/>
    </location>
</feature>
<feature type="strand" evidence="4">
    <location>
        <begin position="354"/>
        <end position="360"/>
    </location>
</feature>
<feature type="helix" evidence="4">
    <location>
        <begin position="365"/>
        <end position="378"/>
    </location>
</feature>
<feature type="turn" evidence="4">
    <location>
        <begin position="379"/>
        <end position="381"/>
    </location>
</feature>
<feature type="helix" evidence="4">
    <location>
        <begin position="383"/>
        <end position="395"/>
    </location>
</feature>
<feature type="strand" evidence="4">
    <location>
        <begin position="403"/>
        <end position="408"/>
    </location>
</feature>
<feature type="helix" evidence="4">
    <location>
        <begin position="412"/>
        <end position="425"/>
    </location>
</feature>
<feature type="strand" evidence="4">
    <location>
        <begin position="428"/>
        <end position="431"/>
    </location>
</feature>
<feature type="strand" evidence="4">
    <location>
        <begin position="433"/>
        <end position="437"/>
    </location>
</feature>
<feature type="helix" evidence="4">
    <location>
        <begin position="464"/>
        <end position="476"/>
    </location>
</feature>
<feature type="strand" evidence="4">
    <location>
        <begin position="479"/>
        <end position="488"/>
    </location>
</feature>
<feature type="turn" evidence="4">
    <location>
        <begin position="489"/>
        <end position="491"/>
    </location>
</feature>
<feature type="strand" evidence="4">
    <location>
        <begin position="492"/>
        <end position="503"/>
    </location>
</feature>
<feature type="helix" evidence="4">
    <location>
        <begin position="507"/>
        <end position="530"/>
    </location>
</feature>
<feature type="helix" evidence="4">
    <location>
        <begin position="534"/>
        <end position="543"/>
    </location>
</feature>
<dbReference type="EC" id="4.2.1.49" evidence="1"/>
<dbReference type="EMBL" id="BA000043">
    <property type="protein sequence ID" value="BAD75652.1"/>
    <property type="molecule type" value="Genomic_DNA"/>
</dbReference>
<dbReference type="RefSeq" id="WP_011230864.1">
    <property type="nucleotide sequence ID" value="NC_006510.1"/>
</dbReference>
<dbReference type="PDB" id="1X87">
    <property type="method" value="X-ray"/>
    <property type="resolution" value="2.40 A"/>
    <property type="chains" value="A/B=1-551"/>
</dbReference>
<dbReference type="PDBsum" id="1X87"/>
<dbReference type="SMR" id="Q5L084"/>
<dbReference type="STRING" id="235909.GK1367"/>
<dbReference type="KEGG" id="gka:GK1367"/>
<dbReference type="eggNOG" id="COG2987">
    <property type="taxonomic scope" value="Bacteria"/>
</dbReference>
<dbReference type="HOGENOM" id="CLU_018868_0_1_9"/>
<dbReference type="UniPathway" id="UPA00379">
    <property type="reaction ID" value="UER00550"/>
</dbReference>
<dbReference type="EvolutionaryTrace" id="Q5L084"/>
<dbReference type="Proteomes" id="UP000001172">
    <property type="component" value="Chromosome"/>
</dbReference>
<dbReference type="GO" id="GO:0005737">
    <property type="term" value="C:cytoplasm"/>
    <property type="evidence" value="ECO:0007669"/>
    <property type="project" value="UniProtKB-SubCell"/>
</dbReference>
<dbReference type="GO" id="GO:0016153">
    <property type="term" value="F:urocanate hydratase activity"/>
    <property type="evidence" value="ECO:0007669"/>
    <property type="project" value="UniProtKB-UniRule"/>
</dbReference>
<dbReference type="GO" id="GO:0019556">
    <property type="term" value="P:L-histidine catabolic process to glutamate and formamide"/>
    <property type="evidence" value="ECO:0007669"/>
    <property type="project" value="UniProtKB-UniPathway"/>
</dbReference>
<dbReference type="GO" id="GO:0019557">
    <property type="term" value="P:L-histidine catabolic process to glutamate and formate"/>
    <property type="evidence" value="ECO:0007669"/>
    <property type="project" value="UniProtKB-UniPathway"/>
</dbReference>
<dbReference type="FunFam" id="3.40.50.10730:FF:000001">
    <property type="entry name" value="Urocanate hydratase"/>
    <property type="match status" value="1"/>
</dbReference>
<dbReference type="Gene3D" id="3.40.50.10730">
    <property type="entry name" value="Urocanase like domains"/>
    <property type="match status" value="1"/>
</dbReference>
<dbReference type="Gene3D" id="3.40.1770.10">
    <property type="entry name" value="Urocanase superfamily"/>
    <property type="match status" value="1"/>
</dbReference>
<dbReference type="HAMAP" id="MF_00577">
    <property type="entry name" value="HutU"/>
    <property type="match status" value="1"/>
</dbReference>
<dbReference type="InterPro" id="IPR055351">
    <property type="entry name" value="Urocanase"/>
</dbReference>
<dbReference type="InterPro" id="IPR023637">
    <property type="entry name" value="Urocanase-like"/>
</dbReference>
<dbReference type="InterPro" id="IPR035401">
    <property type="entry name" value="Urocanase_C"/>
</dbReference>
<dbReference type="InterPro" id="IPR038364">
    <property type="entry name" value="Urocanase_central_sf"/>
</dbReference>
<dbReference type="InterPro" id="IPR023636">
    <property type="entry name" value="Urocanase_CS"/>
</dbReference>
<dbReference type="InterPro" id="IPR035400">
    <property type="entry name" value="Urocanase_N"/>
</dbReference>
<dbReference type="InterPro" id="IPR035085">
    <property type="entry name" value="Urocanase_Rossmann-like"/>
</dbReference>
<dbReference type="InterPro" id="IPR036190">
    <property type="entry name" value="Urocanase_sf"/>
</dbReference>
<dbReference type="NCBIfam" id="TIGR01228">
    <property type="entry name" value="hutU"/>
    <property type="match status" value="1"/>
</dbReference>
<dbReference type="NCBIfam" id="NF003820">
    <property type="entry name" value="PRK05414.1"/>
    <property type="match status" value="1"/>
</dbReference>
<dbReference type="PANTHER" id="PTHR12216">
    <property type="entry name" value="UROCANATE HYDRATASE"/>
    <property type="match status" value="1"/>
</dbReference>
<dbReference type="PANTHER" id="PTHR12216:SF4">
    <property type="entry name" value="UROCANATE HYDRATASE"/>
    <property type="match status" value="1"/>
</dbReference>
<dbReference type="Pfam" id="PF01175">
    <property type="entry name" value="Urocanase"/>
    <property type="match status" value="1"/>
</dbReference>
<dbReference type="Pfam" id="PF17392">
    <property type="entry name" value="Urocanase_C"/>
    <property type="match status" value="1"/>
</dbReference>
<dbReference type="Pfam" id="PF17391">
    <property type="entry name" value="Urocanase_N"/>
    <property type="match status" value="1"/>
</dbReference>
<dbReference type="PIRSF" id="PIRSF001423">
    <property type="entry name" value="Urocanate_hydrat"/>
    <property type="match status" value="1"/>
</dbReference>
<dbReference type="SUPFAM" id="SSF111326">
    <property type="entry name" value="Urocanase"/>
    <property type="match status" value="1"/>
</dbReference>
<dbReference type="PROSITE" id="PS01233">
    <property type="entry name" value="UROCANASE"/>
    <property type="match status" value="1"/>
</dbReference>
<evidence type="ECO:0000255" key="1">
    <source>
        <dbReference type="HAMAP-Rule" id="MF_00577"/>
    </source>
</evidence>
<evidence type="ECO:0000269" key="2">
    <source ref="2"/>
</evidence>
<evidence type="ECO:0007744" key="3">
    <source>
        <dbReference type="PDB" id="1X87"/>
    </source>
</evidence>
<evidence type="ECO:0007829" key="4">
    <source>
        <dbReference type="PDB" id="1X87"/>
    </source>
</evidence>
<name>HUTU_GEOKA</name>
<gene>
    <name evidence="1" type="primary">hutU</name>
    <name type="ordered locus">GK1367</name>
</gene>
<keyword id="KW-0002">3D-structure</keyword>
<keyword id="KW-0963">Cytoplasm</keyword>
<keyword id="KW-0369">Histidine metabolism</keyword>
<keyword id="KW-0456">Lyase</keyword>
<keyword id="KW-0520">NAD</keyword>
<keyword id="KW-1185">Reference proteome</keyword>
<protein>
    <recommendedName>
        <fullName evidence="1">Urocanate hydratase</fullName>
        <shortName evidence="1">Urocanase</shortName>
        <ecNumber evidence="1">4.2.1.49</ecNumber>
    </recommendedName>
    <alternativeName>
        <fullName evidence="1">Imidazolonepropionate hydrolase</fullName>
    </alternativeName>
</protein>